<name>RLMG_SALSV</name>
<proteinExistence type="inferred from homology"/>
<gene>
    <name evidence="1" type="primary">rlmG</name>
    <name type="ordered locus">SeSA_A3411</name>
</gene>
<organism>
    <name type="scientific">Salmonella schwarzengrund (strain CVM19633)</name>
    <dbReference type="NCBI Taxonomy" id="439843"/>
    <lineage>
        <taxon>Bacteria</taxon>
        <taxon>Pseudomonadati</taxon>
        <taxon>Pseudomonadota</taxon>
        <taxon>Gammaproteobacteria</taxon>
        <taxon>Enterobacterales</taxon>
        <taxon>Enterobacteriaceae</taxon>
        <taxon>Salmonella</taxon>
    </lineage>
</organism>
<evidence type="ECO:0000255" key="1">
    <source>
        <dbReference type="HAMAP-Rule" id="MF_01859"/>
    </source>
</evidence>
<accession>B4TVV4</accession>
<keyword id="KW-0963">Cytoplasm</keyword>
<keyword id="KW-0489">Methyltransferase</keyword>
<keyword id="KW-0698">rRNA processing</keyword>
<keyword id="KW-0949">S-adenosyl-L-methionine</keyword>
<keyword id="KW-0808">Transferase</keyword>
<sequence length="378" mass="42272">MSHVDDGFRSLTLKRFPQTDDVNPLLAWEAADEYLLQQLDETEIRGPVLILNDTFGALSCALAEHSPYSIGDSYLSELGTRENLRHNGIAESSVTFLDSTADYPQAPGVVLIKVPKTLALLEQQLRALRKVVTAQTRIIAGAKARDIHTSTLELFEKVLGPTTTTLAWKKARLINCTFSHPQLADAPQTLSWKLEDTGWTIHNHANVFSRTGLDIGARFFMQHLPENLDGEIVDLGCGNGVIGLSLLAKNPQANVVFVDESPMAVDSSRLNVETNLPEAFERCEFMINNALSGVEPFRFNAVFCNPPFHQKHALTDNIAWEMFHHARRCLKINGELYIVANRHLDYFHKLKKIFGNCATIATNNKFVILKAVKQGRRR</sequence>
<dbReference type="EC" id="2.1.1.174" evidence="1"/>
<dbReference type="EMBL" id="CP001127">
    <property type="protein sequence ID" value="ACF89802.1"/>
    <property type="molecule type" value="Genomic_DNA"/>
</dbReference>
<dbReference type="RefSeq" id="WP_000019989.1">
    <property type="nucleotide sequence ID" value="NC_011094.1"/>
</dbReference>
<dbReference type="SMR" id="B4TVV4"/>
<dbReference type="KEGG" id="sew:SeSA_A3411"/>
<dbReference type="HOGENOM" id="CLU_040288_4_0_6"/>
<dbReference type="Proteomes" id="UP000001865">
    <property type="component" value="Chromosome"/>
</dbReference>
<dbReference type="GO" id="GO:0005737">
    <property type="term" value="C:cytoplasm"/>
    <property type="evidence" value="ECO:0007669"/>
    <property type="project" value="UniProtKB-SubCell"/>
</dbReference>
<dbReference type="GO" id="GO:0052916">
    <property type="term" value="F:23S rRNA (guanine(1835)-N(2))-methyltransferase activity"/>
    <property type="evidence" value="ECO:0007669"/>
    <property type="project" value="UniProtKB-EC"/>
</dbReference>
<dbReference type="GO" id="GO:0003676">
    <property type="term" value="F:nucleic acid binding"/>
    <property type="evidence" value="ECO:0007669"/>
    <property type="project" value="InterPro"/>
</dbReference>
<dbReference type="CDD" id="cd02440">
    <property type="entry name" value="AdoMet_MTases"/>
    <property type="match status" value="1"/>
</dbReference>
<dbReference type="FunFam" id="3.40.50.150:FF:000046">
    <property type="entry name" value="Ribosomal RNA large subunit methyltransferase G"/>
    <property type="match status" value="1"/>
</dbReference>
<dbReference type="FunFam" id="3.40.50.150:FF:000047">
    <property type="entry name" value="Ribosomal RNA large subunit methyltransferase G"/>
    <property type="match status" value="1"/>
</dbReference>
<dbReference type="Gene3D" id="3.40.50.150">
    <property type="entry name" value="Vaccinia Virus protein VP39"/>
    <property type="match status" value="2"/>
</dbReference>
<dbReference type="HAMAP" id="MF_01859">
    <property type="entry name" value="23SrRNA_methyltr_G"/>
    <property type="match status" value="1"/>
</dbReference>
<dbReference type="InterPro" id="IPR002052">
    <property type="entry name" value="DNA_methylase_N6_adenine_CS"/>
</dbReference>
<dbReference type="InterPro" id="IPR017237">
    <property type="entry name" value="rRNA_m2G-MeTrfase_RlmG"/>
</dbReference>
<dbReference type="InterPro" id="IPR046977">
    <property type="entry name" value="RsmC/RlmG"/>
</dbReference>
<dbReference type="InterPro" id="IPR029063">
    <property type="entry name" value="SAM-dependent_MTases_sf"/>
</dbReference>
<dbReference type="InterPro" id="IPR007848">
    <property type="entry name" value="Small_mtfrase_dom"/>
</dbReference>
<dbReference type="NCBIfam" id="NF011577">
    <property type="entry name" value="PRK15001.1"/>
    <property type="match status" value="1"/>
</dbReference>
<dbReference type="PANTHER" id="PTHR47816:SF5">
    <property type="entry name" value="RIBOSOMAL RNA LARGE SUBUNIT METHYLTRANSFERASE G"/>
    <property type="match status" value="1"/>
</dbReference>
<dbReference type="PANTHER" id="PTHR47816">
    <property type="entry name" value="RIBOSOMAL RNA SMALL SUBUNIT METHYLTRANSFERASE C"/>
    <property type="match status" value="1"/>
</dbReference>
<dbReference type="Pfam" id="PF05175">
    <property type="entry name" value="MTS"/>
    <property type="match status" value="1"/>
</dbReference>
<dbReference type="PIRSF" id="PIRSF037565">
    <property type="entry name" value="RRNA_m2G_Mtase_RsmD_prd"/>
    <property type="match status" value="1"/>
</dbReference>
<dbReference type="SUPFAM" id="SSF53335">
    <property type="entry name" value="S-adenosyl-L-methionine-dependent methyltransferases"/>
    <property type="match status" value="1"/>
</dbReference>
<protein>
    <recommendedName>
        <fullName evidence="1">Ribosomal RNA large subunit methyltransferase G</fullName>
        <ecNumber evidence="1">2.1.1.174</ecNumber>
    </recommendedName>
    <alternativeName>
        <fullName evidence="1">23S rRNA m2G1835 methyltransferase</fullName>
    </alternativeName>
    <alternativeName>
        <fullName evidence="1">rRNA (guanine-N(2)-)-methyltransferase RlmG</fullName>
    </alternativeName>
</protein>
<reference key="1">
    <citation type="journal article" date="2011" name="J. Bacteriol.">
        <title>Comparative genomics of 28 Salmonella enterica isolates: evidence for CRISPR-mediated adaptive sublineage evolution.</title>
        <authorList>
            <person name="Fricke W.F."/>
            <person name="Mammel M.K."/>
            <person name="McDermott P.F."/>
            <person name="Tartera C."/>
            <person name="White D.G."/>
            <person name="Leclerc J.E."/>
            <person name="Ravel J."/>
            <person name="Cebula T.A."/>
        </authorList>
    </citation>
    <scope>NUCLEOTIDE SEQUENCE [LARGE SCALE GENOMIC DNA]</scope>
    <source>
        <strain>CVM19633</strain>
    </source>
</reference>
<comment type="function">
    <text evidence="1">Specifically methylates the guanine in position 1835 (m2G1835) of 23S rRNA.</text>
</comment>
<comment type="catalytic activity">
    <reaction evidence="1">
        <text>guanosine(1835) in 23S rRNA + S-adenosyl-L-methionine = N(2)-methylguanosine(1835) in 23S rRNA + S-adenosyl-L-homocysteine + H(+)</text>
        <dbReference type="Rhea" id="RHEA:42744"/>
        <dbReference type="Rhea" id="RHEA-COMP:10217"/>
        <dbReference type="Rhea" id="RHEA-COMP:10218"/>
        <dbReference type="ChEBI" id="CHEBI:15378"/>
        <dbReference type="ChEBI" id="CHEBI:57856"/>
        <dbReference type="ChEBI" id="CHEBI:59789"/>
        <dbReference type="ChEBI" id="CHEBI:74269"/>
        <dbReference type="ChEBI" id="CHEBI:74481"/>
        <dbReference type="EC" id="2.1.1.174"/>
    </reaction>
</comment>
<comment type="subcellular location">
    <subcellularLocation>
        <location evidence="1">Cytoplasm</location>
    </subcellularLocation>
</comment>
<comment type="similarity">
    <text evidence="1">Belongs to the methyltransferase superfamily. RlmG family.</text>
</comment>
<feature type="chain" id="PRO_0000366500" description="Ribosomal RNA large subunit methyltransferase G">
    <location>
        <begin position="1"/>
        <end position="378"/>
    </location>
</feature>